<organism>
    <name type="scientific">Synechococcus elongatus (strain ATCC 33912 / PCC 7942 / FACHB-805)</name>
    <name type="common">Anacystis nidulans R2</name>
    <dbReference type="NCBI Taxonomy" id="1140"/>
    <lineage>
        <taxon>Bacteria</taxon>
        <taxon>Bacillati</taxon>
        <taxon>Cyanobacteriota</taxon>
        <taxon>Cyanophyceae</taxon>
        <taxon>Synechococcales</taxon>
        <taxon>Synechococcaceae</taxon>
        <taxon>Synechococcus</taxon>
    </lineage>
</organism>
<dbReference type="EMBL" id="U20147">
    <property type="protein sequence ID" value="AAB65803.1"/>
    <property type="molecule type" value="Genomic_DNA"/>
</dbReference>
<dbReference type="EMBL" id="CP000100">
    <property type="protein sequence ID" value="ABB57118.1"/>
    <property type="molecule type" value="Genomic_DNA"/>
</dbReference>
<dbReference type="RefSeq" id="WP_011242773.1">
    <property type="nucleotide sequence ID" value="NZ_JACJTX010000003.1"/>
</dbReference>
<dbReference type="PDB" id="1BXU">
    <property type="method" value="X-ray"/>
    <property type="resolution" value="1.90 A"/>
    <property type="chains" value="A=35-125"/>
</dbReference>
<dbReference type="PDB" id="1BXV">
    <property type="method" value="X-ray"/>
    <property type="resolution" value="1.80 A"/>
    <property type="chains" value="A=35-125"/>
</dbReference>
<dbReference type="PDBsum" id="1BXU"/>
<dbReference type="PDBsum" id="1BXV"/>
<dbReference type="SMR" id="P55020"/>
<dbReference type="STRING" id="1140.Synpcc7942_1088"/>
<dbReference type="PaxDb" id="1140-Synpcc7942_1088"/>
<dbReference type="GeneID" id="72429941"/>
<dbReference type="KEGG" id="syf:Synpcc7942_1088"/>
<dbReference type="eggNOG" id="COG3794">
    <property type="taxonomic scope" value="Bacteria"/>
</dbReference>
<dbReference type="HOGENOM" id="CLU_084115_0_1_3"/>
<dbReference type="OrthoDB" id="680163at2"/>
<dbReference type="BioCyc" id="MetaCyc:SYNPCC7942_1088-MONOMER"/>
<dbReference type="BioCyc" id="SYNEL:SYNPCC7942_1088-MONOMER"/>
<dbReference type="EvolutionaryTrace" id="P55020"/>
<dbReference type="Proteomes" id="UP000889800">
    <property type="component" value="Chromosome"/>
</dbReference>
<dbReference type="GO" id="GO:0031676">
    <property type="term" value="C:plasma membrane-derived thylakoid membrane"/>
    <property type="evidence" value="ECO:0007669"/>
    <property type="project" value="UniProtKB-SubCell"/>
</dbReference>
<dbReference type="GO" id="GO:0005507">
    <property type="term" value="F:copper ion binding"/>
    <property type="evidence" value="ECO:0007669"/>
    <property type="project" value="UniProtKB-UniRule"/>
</dbReference>
<dbReference type="GO" id="GO:0009055">
    <property type="term" value="F:electron transfer activity"/>
    <property type="evidence" value="ECO:0007669"/>
    <property type="project" value="UniProtKB-UniRule"/>
</dbReference>
<dbReference type="CDD" id="cd04219">
    <property type="entry name" value="Plastocyanin"/>
    <property type="match status" value="1"/>
</dbReference>
<dbReference type="Gene3D" id="2.60.40.420">
    <property type="entry name" value="Cupredoxins - blue copper proteins"/>
    <property type="match status" value="1"/>
</dbReference>
<dbReference type="HAMAP" id="MF_00566">
    <property type="entry name" value="Cytb6_f_plastocyanin"/>
    <property type="match status" value="1"/>
</dbReference>
<dbReference type="InterPro" id="IPR000923">
    <property type="entry name" value="BlueCu_1"/>
</dbReference>
<dbReference type="InterPro" id="IPR028871">
    <property type="entry name" value="BlueCu_1_BS"/>
</dbReference>
<dbReference type="InterPro" id="IPR001235">
    <property type="entry name" value="Copper_blue_Plastocyanin"/>
</dbReference>
<dbReference type="InterPro" id="IPR008972">
    <property type="entry name" value="Cupredoxin"/>
</dbReference>
<dbReference type="InterPro" id="IPR002387">
    <property type="entry name" value="Plastocyanin"/>
</dbReference>
<dbReference type="InterPro" id="IPR023511">
    <property type="entry name" value="Plastocyanin_cyanobac"/>
</dbReference>
<dbReference type="NCBIfam" id="TIGR02656">
    <property type="entry name" value="cyanin_plasto"/>
    <property type="match status" value="1"/>
</dbReference>
<dbReference type="PANTHER" id="PTHR34192">
    <property type="entry name" value="PLASTOCYANIN MAJOR ISOFORM, CHLOROPLASTIC-RELATED"/>
    <property type="match status" value="1"/>
</dbReference>
<dbReference type="PANTHER" id="PTHR34192:SF10">
    <property type="entry name" value="PLASTOCYANIN MAJOR ISOFORM, CHLOROPLASTIC-RELATED"/>
    <property type="match status" value="1"/>
</dbReference>
<dbReference type="Pfam" id="PF00127">
    <property type="entry name" value="Copper-bind"/>
    <property type="match status" value="1"/>
</dbReference>
<dbReference type="PRINTS" id="PR00156">
    <property type="entry name" value="COPPERBLUE"/>
</dbReference>
<dbReference type="PRINTS" id="PR00157">
    <property type="entry name" value="PLASTOCYANIN"/>
</dbReference>
<dbReference type="SUPFAM" id="SSF49503">
    <property type="entry name" value="Cupredoxins"/>
    <property type="match status" value="1"/>
</dbReference>
<dbReference type="PROSITE" id="PS00196">
    <property type="entry name" value="COPPER_BLUE"/>
    <property type="match status" value="1"/>
</dbReference>
<gene>
    <name type="primary">petE</name>
    <name type="ordered locus">Synpcc7942_1088</name>
</gene>
<name>PLAS_SYNE7</name>
<protein>
    <recommendedName>
        <fullName>Plastocyanin</fullName>
    </recommendedName>
</protein>
<proteinExistence type="evidence at protein level"/>
<evidence type="ECO:0000255" key="1">
    <source>
        <dbReference type="HAMAP-Rule" id="MF_00566"/>
    </source>
</evidence>
<evidence type="ECO:0000269" key="2">
    <source>
    </source>
</evidence>
<evidence type="ECO:0007829" key="3">
    <source>
        <dbReference type="PDB" id="1BXV"/>
    </source>
</evidence>
<feature type="signal peptide">
    <location>
        <begin position="1"/>
        <end position="34"/>
    </location>
</feature>
<feature type="chain" id="PRO_0000002903" description="Plastocyanin">
    <location>
        <begin position="35"/>
        <end position="125"/>
    </location>
</feature>
<feature type="domain" description="Plastocyanin-like">
    <location>
        <begin position="35"/>
        <end position="125"/>
    </location>
</feature>
<feature type="binding site" evidence="2">
    <location>
        <position position="73"/>
    </location>
    <ligand>
        <name>Cu cation</name>
        <dbReference type="ChEBI" id="CHEBI:23378"/>
    </ligand>
</feature>
<feature type="binding site" evidence="2">
    <location>
        <position position="110"/>
    </location>
    <ligand>
        <name>Cu cation</name>
        <dbReference type="ChEBI" id="CHEBI:23378"/>
    </ligand>
</feature>
<feature type="binding site" evidence="2">
    <location>
        <position position="113"/>
    </location>
    <ligand>
        <name>Cu cation</name>
        <dbReference type="ChEBI" id="CHEBI:23378"/>
    </ligand>
</feature>
<feature type="binding site" evidence="2">
    <location>
        <position position="118"/>
    </location>
    <ligand>
        <name>Cu cation</name>
        <dbReference type="ChEBI" id="CHEBI:23378"/>
    </ligand>
</feature>
<feature type="strand" evidence="3">
    <location>
        <begin position="36"/>
        <end position="42"/>
    </location>
</feature>
<feature type="strand" evidence="3">
    <location>
        <begin position="48"/>
        <end position="58"/>
    </location>
</feature>
<feature type="strand" evidence="3">
    <location>
        <begin position="62"/>
        <end position="67"/>
    </location>
</feature>
<feature type="strand" evidence="3">
    <location>
        <begin position="73"/>
        <end position="77"/>
    </location>
</feature>
<feature type="helix" evidence="3">
    <location>
        <begin position="81"/>
        <end position="83"/>
    </location>
</feature>
<feature type="strand" evidence="3">
    <location>
        <begin position="85"/>
        <end position="89"/>
    </location>
</feature>
<feature type="strand" evidence="3">
    <location>
        <begin position="95"/>
        <end position="99"/>
    </location>
</feature>
<feature type="strand" evidence="3">
    <location>
        <begin position="104"/>
        <end position="109"/>
    </location>
</feature>
<feature type="turn" evidence="3">
    <location>
        <begin position="111"/>
        <end position="113"/>
    </location>
</feature>
<feature type="helix" evidence="3">
    <location>
        <begin position="114"/>
        <end position="116"/>
    </location>
</feature>
<feature type="strand" evidence="3">
    <location>
        <begin position="119"/>
        <end position="125"/>
    </location>
</feature>
<accession>P55020</accession>
<accession>Q31PA1</accession>
<sequence length="125" mass="13308">MKVLASFARRLSLFAVAAVLCVGSFFLSAAPASAQTVAIKMGADNGMLAFEPSTIEIQAGDTVQWVNNKLAPHNVVVEGQPELSHKDLAFSPGETFEATFSEPGTYTYYCEPHRGAGMVGKIVVQ</sequence>
<comment type="function">
    <text evidence="1 2">Participates in electron transfer between P700 and the cytochrome b6-f complex in photosystem I.</text>
</comment>
<comment type="cofactor">
    <cofactor evidence="1 2">
        <name>Cu(2+)</name>
        <dbReference type="ChEBI" id="CHEBI:29036"/>
    </cofactor>
    <text>The crystal structure with reduced Cu(1+) has also been determined (PubMed:10320332).</text>
</comment>
<comment type="subcellular location">
    <subcellularLocation>
        <location evidence="2">Cellular thylakoid membrane</location>
        <topology evidence="2">Peripheral membrane protein</topology>
        <orientation evidence="2">Lumenal side</orientation>
    </subcellularLocation>
    <text>Loosely bound to the thylakoid inner membrane surface (PubMed:10320332).</text>
</comment>
<comment type="similarity">
    <text evidence="1">Belongs to the plastocyanin family.</text>
</comment>
<keyword id="KW-0002">3D-structure</keyword>
<keyword id="KW-0186">Copper</keyword>
<keyword id="KW-0249">Electron transport</keyword>
<keyword id="KW-0472">Membrane</keyword>
<keyword id="KW-0479">Metal-binding</keyword>
<keyword id="KW-1185">Reference proteome</keyword>
<keyword id="KW-0732">Signal</keyword>
<keyword id="KW-0793">Thylakoid</keyword>
<keyword id="KW-0813">Transport</keyword>
<reference key="1">
    <citation type="journal article" date="1996" name="J. Bacteriol.">
        <title>The heat shock protein ClpB mediates the development of thermotolerance in the cyanobacterium Synechococcus sp. strain PCC 7942.</title>
        <authorList>
            <person name="Eriksson M.J."/>
            <person name="Clarke A.K."/>
        </authorList>
    </citation>
    <scope>NUCLEOTIDE SEQUENCE [GENOMIC DNA]</scope>
</reference>
<reference key="2">
    <citation type="submission" date="2005-08" db="EMBL/GenBank/DDBJ databases">
        <title>Complete sequence of chromosome 1 of Synechococcus elongatus PCC 7942.</title>
        <authorList>
            <consortium name="US DOE Joint Genome Institute"/>
            <person name="Copeland A."/>
            <person name="Lucas S."/>
            <person name="Lapidus A."/>
            <person name="Barry K."/>
            <person name="Detter J.C."/>
            <person name="Glavina T."/>
            <person name="Hammon N."/>
            <person name="Israni S."/>
            <person name="Pitluck S."/>
            <person name="Schmutz J."/>
            <person name="Larimer F."/>
            <person name="Land M."/>
            <person name="Kyrpides N."/>
            <person name="Lykidis A."/>
            <person name="Golden S."/>
            <person name="Richardson P."/>
        </authorList>
    </citation>
    <scope>NUCLEOTIDE SEQUENCE [LARGE SCALE GENOMIC DNA]</scope>
    <source>
        <strain>ATCC 33912 / PCC 7942 / FACHB-805</strain>
    </source>
</reference>
<reference key="3">
    <citation type="journal article" date="1999" name="Biochemistry">
        <title>Crystal structure determinations of oxidized and reduced plastocyanin from the cyanobacterium Synechococcus sp. PCC 7942.</title>
        <authorList>
            <person name="Inoue T."/>
            <person name="Sugawara H."/>
            <person name="Hamanaka S."/>
            <person name="Tsukui H."/>
            <person name="Suzuki E."/>
            <person name="Kohzuma T."/>
            <person name="Kai Y."/>
        </authorList>
    </citation>
    <scope>X-RAY CRYSTALLOGRAPHY (1.80 ANGSTROMS) OF 35-125 IN COMPLEX WITH COPPER</scope>
    <scope>FUNCTION</scope>
    <scope>COFACTOR</scope>
    <scope>SUBCELLULAR LOCATION</scope>
</reference>